<comment type="function">
    <text evidence="2 3">Immunity protein that plays a role in preventing early activation of toxin Tse1. Binds to a large surface of Tse1 and thereby occludes the active site to specifically inhibits enzyme activity by forming a hydrogen bond with the catalytic diad.</text>
</comment>
<comment type="subunit">
    <text evidence="2 3">Forms a heterotetramer with Tse1 consisting of two Tse1 dimers and two Tsi1 dimers. Formation of the complex inactivates Tse1 enzymatic activity.</text>
</comment>
<name>TSI1_PSEAE</name>
<organism>
    <name type="scientific">Pseudomonas aeruginosa (strain ATCC 15692 / DSM 22644 / CIP 104116 / JCM 14847 / LMG 12228 / 1C / PRS 101 / PAO1)</name>
    <dbReference type="NCBI Taxonomy" id="208964"/>
    <lineage>
        <taxon>Bacteria</taxon>
        <taxon>Pseudomonadati</taxon>
        <taxon>Pseudomonadota</taxon>
        <taxon>Gammaproteobacteria</taxon>
        <taxon>Pseudomonadales</taxon>
        <taxon>Pseudomonadaceae</taxon>
        <taxon>Pseudomonas</taxon>
    </lineage>
</organism>
<evidence type="ECO:0000255" key="1"/>
<evidence type="ECO:0000269" key="2">
    <source>
    </source>
</evidence>
<evidence type="ECO:0000269" key="3">
    <source>
    </source>
</evidence>
<evidence type="ECO:0000303" key="4">
    <source>
    </source>
</evidence>
<evidence type="ECO:0007744" key="5">
    <source>
        <dbReference type="PDB" id="3VPJ"/>
    </source>
</evidence>
<evidence type="ECO:0007744" key="6">
    <source>
        <dbReference type="PDB" id="4EQA"/>
    </source>
</evidence>
<evidence type="ECO:0007744" key="7">
    <source>
        <dbReference type="PDB" id="4FGI"/>
    </source>
</evidence>
<evidence type="ECO:0007744" key="8">
    <source>
        <dbReference type="PDB" id="4FQB"/>
    </source>
</evidence>
<evidence type="ECO:0007829" key="9">
    <source>
        <dbReference type="PDB" id="4EQA"/>
    </source>
</evidence>
<proteinExistence type="evidence at protein level"/>
<accession>Q9I2Q0</accession>
<keyword id="KW-0002">3D-structure</keyword>
<keyword id="KW-1015">Disulfide bond</keyword>
<keyword id="KW-1185">Reference proteome</keyword>
<keyword id="KW-0732">Signal</keyword>
<sequence>MKLLAGSFAALFLSLSAQAADCTFTQLEIVPQFGSPNMFGGEDEHVRVMFSNEDPNDDNPDAFPEPPVYLADRDSGNDCRIEDGGIWSRGGVFLSQDGRRVLMHEFSGSSAELVSYDSATCKVVHREDISGQRWAVDKDGLRLGQKCSGESVDSCAKIVKRSLAPFCQTAKK</sequence>
<dbReference type="EMBL" id="AE004091">
    <property type="protein sequence ID" value="AAG05234.1"/>
    <property type="molecule type" value="Genomic_DNA"/>
</dbReference>
<dbReference type="PIR" id="G83415">
    <property type="entry name" value="G83415"/>
</dbReference>
<dbReference type="RefSeq" id="NP_250536.1">
    <property type="nucleotide sequence ID" value="NC_002516.2"/>
</dbReference>
<dbReference type="RefSeq" id="WP_003113603.1">
    <property type="nucleotide sequence ID" value="NZ_QZGE01000003.1"/>
</dbReference>
<dbReference type="PDB" id="3VPJ">
    <property type="method" value="X-ray"/>
    <property type="resolution" value="2.50 A"/>
    <property type="chains" value="E/F/G/H=1-172"/>
</dbReference>
<dbReference type="PDB" id="4EQA">
    <property type="method" value="X-ray"/>
    <property type="resolution" value="1.60 A"/>
    <property type="chains" value="C/D=20-172"/>
</dbReference>
<dbReference type="PDB" id="4FGI">
    <property type="method" value="X-ray"/>
    <property type="resolution" value="3.20 A"/>
    <property type="chains" value="B/D/F/H=24-172"/>
</dbReference>
<dbReference type="PDB" id="4FQB">
    <property type="method" value="X-ray"/>
    <property type="resolution" value="2.69 A"/>
    <property type="chains" value="B/D/F/H=20-172"/>
</dbReference>
<dbReference type="PDBsum" id="3VPJ"/>
<dbReference type="PDBsum" id="4EQA"/>
<dbReference type="PDBsum" id="4FGI"/>
<dbReference type="PDBsum" id="4FQB"/>
<dbReference type="SMR" id="Q9I2Q0"/>
<dbReference type="STRING" id="208964.PA1845"/>
<dbReference type="PaxDb" id="208964-PA1845"/>
<dbReference type="DNASU" id="880643"/>
<dbReference type="GeneID" id="880643"/>
<dbReference type="KEGG" id="pae:PA1845"/>
<dbReference type="PATRIC" id="fig|208964.12.peg.1918"/>
<dbReference type="PseudoCAP" id="PA1845"/>
<dbReference type="HOGENOM" id="CLU_106704_0_0_6"/>
<dbReference type="InParanoid" id="Q9I2Q0"/>
<dbReference type="OrthoDB" id="6872892at2"/>
<dbReference type="BioCyc" id="PAER208964:G1FZ6-1884-MONOMER"/>
<dbReference type="EvolutionaryTrace" id="Q9I2Q0"/>
<dbReference type="Proteomes" id="UP000002438">
    <property type="component" value="Chromosome"/>
</dbReference>
<dbReference type="Gene3D" id="2.40.128.650">
    <property type="match status" value="1"/>
</dbReference>
<dbReference type="InterPro" id="IPR049345">
    <property type="entry name" value="Tsi1"/>
</dbReference>
<dbReference type="InterPro" id="IPR049346">
    <property type="entry name" value="Tsi1-like_sf"/>
</dbReference>
<dbReference type="Pfam" id="PF21565">
    <property type="entry name" value="Tsi1"/>
    <property type="match status" value="1"/>
</dbReference>
<gene>
    <name evidence="4" type="primary">tsi1</name>
    <name type="ordered locus">PA1845</name>
</gene>
<reference key="1">
    <citation type="journal article" date="2000" name="Nature">
        <title>Complete genome sequence of Pseudomonas aeruginosa PAO1, an opportunistic pathogen.</title>
        <authorList>
            <person name="Stover C.K."/>
            <person name="Pham X.-Q.T."/>
            <person name="Erwin A.L."/>
            <person name="Mizoguchi S.D."/>
            <person name="Warrener P."/>
            <person name="Hickey M.J."/>
            <person name="Brinkman F.S.L."/>
            <person name="Hufnagle W.O."/>
            <person name="Kowalik D.J."/>
            <person name="Lagrou M."/>
            <person name="Garber R.L."/>
            <person name="Goltry L."/>
            <person name="Tolentino E."/>
            <person name="Westbrock-Wadman S."/>
            <person name="Yuan Y."/>
            <person name="Brody L.L."/>
            <person name="Coulter S.N."/>
            <person name="Folger K.R."/>
            <person name="Kas A."/>
            <person name="Larbig K."/>
            <person name="Lim R.M."/>
            <person name="Smith K.A."/>
            <person name="Spencer D.H."/>
            <person name="Wong G.K.-S."/>
            <person name="Wu Z."/>
            <person name="Paulsen I.T."/>
            <person name="Reizer J."/>
            <person name="Saier M.H. Jr."/>
            <person name="Hancock R.E.W."/>
            <person name="Lory S."/>
            <person name="Olson M.V."/>
        </authorList>
    </citation>
    <scope>NUCLEOTIDE SEQUENCE [LARGE SCALE GENOMIC DNA]</scope>
    <source>
        <strain>ATCC 15692 / DSM 22644 / CIP 104116 / JCM 14847 / LMG 12228 / 1C / PRS 101 / PAO1</strain>
    </source>
</reference>
<reference evidence="6" key="2">
    <citation type="journal article" date="2012" name="Biochem. J.">
        <title>Structural insight into how Pseudomonas aeruginosa peptidoglycanhydrolase Tse1 and its immunity protein Tsi1 function.</title>
        <authorList>
            <person name="Shang G."/>
            <person name="Liu X."/>
            <person name="Lu D."/>
            <person name="Zhang J."/>
            <person name="Li N."/>
            <person name="Zhu C."/>
            <person name="Liu S."/>
            <person name="Yu Q."/>
            <person name="Zhao Y."/>
            <person name="Zhang H."/>
            <person name="Hu J."/>
            <person name="Cang H."/>
            <person name="Xu S."/>
            <person name="Gu L."/>
        </authorList>
    </citation>
    <scope>X-RAY CRYSTALLOGRAPHY (1.60 ANGSTROMS) OF 20-172</scope>
    <scope>DISULFIDE BONDS</scope>
    <scope>INTERACTION WITH TSE1</scope>
    <scope>FUNCTION</scope>
</reference>
<reference evidence="5" key="3">
    <citation type="journal article" date="2012" name="J. Biol. Chem.">
        <title>Structural insights into the Pseudomonas aeruginosa type VI virulence effector Tse1 bacteriolysis and self-protection mechanisms.</title>
        <authorList>
            <person name="Ding J."/>
            <person name="Wang W."/>
            <person name="Feng H."/>
            <person name="Zhang Y."/>
            <person name="Wang D.C."/>
        </authorList>
    </citation>
    <scope>X-RAY CRYSTALLOGRAPHY (2.50 ANGSTROMS)</scope>
    <scope>DISULFIDE BONDS</scope>
    <scope>INTERACTION WITH TSE1</scope>
    <scope>FUNCTION</scope>
</reference>
<protein>
    <recommendedName>
        <fullName evidence="4">Immune protein Tsi1</fullName>
    </recommendedName>
</protein>
<feature type="signal peptide" evidence="1">
    <location>
        <begin position="1"/>
        <end position="19"/>
    </location>
</feature>
<feature type="chain" id="PRO_5004326982" description="Immune protein Tsi1" evidence="1">
    <location>
        <begin position="20"/>
        <end position="172"/>
    </location>
</feature>
<feature type="disulfide bond" evidence="5 6 8">
    <location>
        <begin position="22"/>
        <end position="167"/>
    </location>
</feature>
<feature type="disulfide bond" evidence="5 6 7">
    <location>
        <begin position="79"/>
        <end position="121"/>
    </location>
</feature>
<feature type="disulfide bond" evidence="5 6 7">
    <location>
        <begin position="147"/>
        <end position="155"/>
    </location>
</feature>
<feature type="strand" evidence="9">
    <location>
        <begin position="24"/>
        <end position="26"/>
    </location>
</feature>
<feature type="strand" evidence="9">
    <location>
        <begin position="33"/>
        <end position="35"/>
    </location>
</feature>
<feature type="strand" evidence="9">
    <location>
        <begin position="38"/>
        <end position="42"/>
    </location>
</feature>
<feature type="strand" evidence="9">
    <location>
        <begin position="44"/>
        <end position="51"/>
    </location>
</feature>
<feature type="strand" evidence="9">
    <location>
        <begin position="61"/>
        <end position="63"/>
    </location>
</feature>
<feature type="strand" evidence="9">
    <location>
        <begin position="68"/>
        <end position="72"/>
    </location>
</feature>
<feature type="turn" evidence="9">
    <location>
        <begin position="73"/>
        <end position="75"/>
    </location>
</feature>
<feature type="strand" evidence="9">
    <location>
        <begin position="78"/>
        <end position="81"/>
    </location>
</feature>
<feature type="strand" evidence="9">
    <location>
        <begin position="87"/>
        <end position="95"/>
    </location>
</feature>
<feature type="strand" evidence="9">
    <location>
        <begin position="98"/>
        <end position="107"/>
    </location>
</feature>
<feature type="strand" evidence="9">
    <location>
        <begin position="110"/>
        <end position="117"/>
    </location>
</feature>
<feature type="turn" evidence="9">
    <location>
        <begin position="118"/>
        <end position="120"/>
    </location>
</feature>
<feature type="strand" evidence="9">
    <location>
        <begin position="123"/>
        <end position="128"/>
    </location>
</feature>
<feature type="strand" evidence="9">
    <location>
        <begin position="133"/>
        <end position="137"/>
    </location>
</feature>
<feature type="strand" evidence="9">
    <location>
        <begin position="140"/>
        <end position="151"/>
    </location>
</feature>
<feature type="helix" evidence="9">
    <location>
        <begin position="152"/>
        <end position="154"/>
    </location>
</feature>
<feature type="strand" evidence="9">
    <location>
        <begin position="155"/>
        <end position="161"/>
    </location>
</feature>
<feature type="helix" evidence="9">
    <location>
        <begin position="164"/>
        <end position="167"/>
    </location>
</feature>